<keyword id="KW-0002">3D-structure</keyword>
<keyword id="KW-0963">Cytoplasm</keyword>
<keyword id="KW-0456">Lyase</keyword>
<keyword id="KW-0704">Schiff base</keyword>
<proteinExistence type="evidence at protein level"/>
<accession>A0QLL2</accession>
<organism>
    <name type="scientific">Mycobacterium avium (strain 104)</name>
    <dbReference type="NCBI Taxonomy" id="243243"/>
    <lineage>
        <taxon>Bacteria</taxon>
        <taxon>Bacillati</taxon>
        <taxon>Actinomycetota</taxon>
        <taxon>Actinomycetes</taxon>
        <taxon>Mycobacteriales</taxon>
        <taxon>Mycobacteriaceae</taxon>
        <taxon>Mycobacterium</taxon>
        <taxon>Mycobacterium avium complex (MAC)</taxon>
    </lineage>
</organism>
<evidence type="ECO:0000255" key="1">
    <source>
        <dbReference type="HAMAP-Rule" id="MF_00114"/>
    </source>
</evidence>
<evidence type="ECO:0007829" key="2">
    <source>
        <dbReference type="PDB" id="3NG3"/>
    </source>
</evidence>
<comment type="function">
    <text evidence="1">Catalyzes a reversible aldol reaction between acetaldehyde and D-glyceraldehyde 3-phosphate to generate 2-deoxy-D-ribose 5-phosphate.</text>
</comment>
<comment type="catalytic activity">
    <reaction evidence="1">
        <text>2-deoxy-D-ribose 5-phosphate = D-glyceraldehyde 3-phosphate + acetaldehyde</text>
        <dbReference type="Rhea" id="RHEA:12821"/>
        <dbReference type="ChEBI" id="CHEBI:15343"/>
        <dbReference type="ChEBI" id="CHEBI:59776"/>
        <dbReference type="ChEBI" id="CHEBI:62877"/>
        <dbReference type="EC" id="4.1.2.4"/>
    </reaction>
</comment>
<comment type="pathway">
    <text evidence="1">Carbohydrate degradation; 2-deoxy-D-ribose 1-phosphate degradation; D-glyceraldehyde 3-phosphate and acetaldehyde from 2-deoxy-alpha-D-ribose 1-phosphate: step 2/2.</text>
</comment>
<comment type="subcellular location">
    <subcellularLocation>
        <location evidence="1">Cytoplasm</location>
    </subcellularLocation>
</comment>
<comment type="similarity">
    <text evidence="1">Belongs to the DeoC/FbaB aldolase family. DeoC type 1 subfamily.</text>
</comment>
<name>DEOC_MYCA1</name>
<gene>
    <name evidence="1" type="primary">deoC</name>
    <name type="ordered locus">MAV_4672</name>
</gene>
<protein>
    <recommendedName>
        <fullName evidence="1">Deoxyribose-phosphate aldolase</fullName>
        <shortName evidence="1">DERA</shortName>
        <ecNumber evidence="1">4.1.2.4</ecNumber>
    </recommendedName>
    <alternativeName>
        <fullName evidence="1">2-deoxy-D-ribose 5-phosphate aldolase</fullName>
    </alternativeName>
    <alternativeName>
        <fullName evidence="1">Phosphodeoxyriboaldolase</fullName>
        <shortName evidence="1">Deoxyriboaldolase</shortName>
    </alternativeName>
</protein>
<dbReference type="EC" id="4.1.2.4" evidence="1"/>
<dbReference type="EMBL" id="CP000479">
    <property type="protein sequence ID" value="ABK67136.1"/>
    <property type="molecule type" value="Genomic_DNA"/>
</dbReference>
<dbReference type="RefSeq" id="WP_011726185.1">
    <property type="nucleotide sequence ID" value="NC_008595.1"/>
</dbReference>
<dbReference type="PDB" id="3NG3">
    <property type="method" value="X-ray"/>
    <property type="resolution" value="2.15 A"/>
    <property type="chains" value="A/B/C/D=1-223"/>
</dbReference>
<dbReference type="PDBsum" id="3NG3"/>
<dbReference type="SMR" id="A0QLL2"/>
<dbReference type="KEGG" id="mav:MAV_4672"/>
<dbReference type="HOGENOM" id="CLU_053595_0_0_11"/>
<dbReference type="UniPathway" id="UPA00002">
    <property type="reaction ID" value="UER00468"/>
</dbReference>
<dbReference type="EvolutionaryTrace" id="A0QLL2"/>
<dbReference type="Proteomes" id="UP000001574">
    <property type="component" value="Chromosome"/>
</dbReference>
<dbReference type="GO" id="GO:0005737">
    <property type="term" value="C:cytoplasm"/>
    <property type="evidence" value="ECO:0007669"/>
    <property type="project" value="UniProtKB-SubCell"/>
</dbReference>
<dbReference type="GO" id="GO:0004139">
    <property type="term" value="F:deoxyribose-phosphate aldolase activity"/>
    <property type="evidence" value="ECO:0007669"/>
    <property type="project" value="UniProtKB-UniRule"/>
</dbReference>
<dbReference type="GO" id="GO:0006018">
    <property type="term" value="P:2-deoxyribose 1-phosphate catabolic process"/>
    <property type="evidence" value="ECO:0007669"/>
    <property type="project" value="UniProtKB-UniRule"/>
</dbReference>
<dbReference type="GO" id="GO:0016052">
    <property type="term" value="P:carbohydrate catabolic process"/>
    <property type="evidence" value="ECO:0007669"/>
    <property type="project" value="TreeGrafter"/>
</dbReference>
<dbReference type="GO" id="GO:0009264">
    <property type="term" value="P:deoxyribonucleotide catabolic process"/>
    <property type="evidence" value="ECO:0007669"/>
    <property type="project" value="InterPro"/>
</dbReference>
<dbReference type="CDD" id="cd00959">
    <property type="entry name" value="DeoC"/>
    <property type="match status" value="1"/>
</dbReference>
<dbReference type="FunFam" id="3.20.20.70:FF:000044">
    <property type="entry name" value="Deoxyribose-phosphate aldolase"/>
    <property type="match status" value="1"/>
</dbReference>
<dbReference type="Gene3D" id="3.20.20.70">
    <property type="entry name" value="Aldolase class I"/>
    <property type="match status" value="1"/>
</dbReference>
<dbReference type="HAMAP" id="MF_00114">
    <property type="entry name" value="DeoC_type1"/>
    <property type="match status" value="1"/>
</dbReference>
<dbReference type="InterPro" id="IPR013785">
    <property type="entry name" value="Aldolase_TIM"/>
</dbReference>
<dbReference type="InterPro" id="IPR011343">
    <property type="entry name" value="DeoC"/>
</dbReference>
<dbReference type="InterPro" id="IPR002915">
    <property type="entry name" value="DeoC/FbaB/LacD_aldolase"/>
</dbReference>
<dbReference type="InterPro" id="IPR028581">
    <property type="entry name" value="DeoC_typeI"/>
</dbReference>
<dbReference type="NCBIfam" id="TIGR00126">
    <property type="entry name" value="deoC"/>
    <property type="match status" value="1"/>
</dbReference>
<dbReference type="PANTHER" id="PTHR10889">
    <property type="entry name" value="DEOXYRIBOSE-PHOSPHATE ALDOLASE"/>
    <property type="match status" value="1"/>
</dbReference>
<dbReference type="PANTHER" id="PTHR10889:SF1">
    <property type="entry name" value="DEOXYRIBOSE-PHOSPHATE ALDOLASE"/>
    <property type="match status" value="1"/>
</dbReference>
<dbReference type="Pfam" id="PF01791">
    <property type="entry name" value="DeoC"/>
    <property type="match status" value="1"/>
</dbReference>
<dbReference type="PIRSF" id="PIRSF001357">
    <property type="entry name" value="DeoC"/>
    <property type="match status" value="1"/>
</dbReference>
<dbReference type="SMART" id="SM01133">
    <property type="entry name" value="DeoC"/>
    <property type="match status" value="1"/>
</dbReference>
<dbReference type="SUPFAM" id="SSF51569">
    <property type="entry name" value="Aldolase"/>
    <property type="match status" value="1"/>
</dbReference>
<feature type="chain" id="PRO_1000015324" description="Deoxyribose-phosphate aldolase">
    <location>
        <begin position="1"/>
        <end position="223"/>
    </location>
</feature>
<feature type="active site" description="Proton donor/acceptor" evidence="1">
    <location>
        <position position="92"/>
    </location>
</feature>
<feature type="active site" description="Schiff-base intermediate with acetaldehyde" evidence="1">
    <location>
        <position position="158"/>
    </location>
</feature>
<feature type="active site" description="Proton donor/acceptor" evidence="1">
    <location>
        <position position="188"/>
    </location>
</feature>
<feature type="helix" evidence="2">
    <location>
        <begin position="5"/>
        <end position="9"/>
    </location>
</feature>
<feature type="strand" evidence="2">
    <location>
        <begin position="12"/>
        <end position="15"/>
    </location>
</feature>
<feature type="helix" evidence="2">
    <location>
        <begin position="23"/>
        <end position="36"/>
    </location>
</feature>
<feature type="strand" evidence="2">
    <location>
        <begin position="39"/>
        <end position="43"/>
    </location>
</feature>
<feature type="helix" evidence="2">
    <location>
        <begin position="45"/>
        <end position="47"/>
    </location>
</feature>
<feature type="helix" evidence="2">
    <location>
        <begin position="48"/>
        <end position="53"/>
    </location>
</feature>
<feature type="strand" evidence="2">
    <location>
        <begin position="60"/>
        <end position="65"/>
    </location>
</feature>
<feature type="turn" evidence="2">
    <location>
        <begin position="66"/>
        <end position="68"/>
    </location>
</feature>
<feature type="helix" evidence="2">
    <location>
        <begin position="73"/>
        <end position="85"/>
    </location>
</feature>
<feature type="strand" evidence="2">
    <location>
        <begin position="89"/>
        <end position="94"/>
    </location>
</feature>
<feature type="helix" evidence="2">
    <location>
        <begin position="97"/>
        <end position="101"/>
    </location>
</feature>
<feature type="helix" evidence="2">
    <location>
        <begin position="105"/>
        <end position="119"/>
    </location>
</feature>
<feature type="strand" evidence="2">
    <location>
        <begin position="122"/>
        <end position="127"/>
    </location>
</feature>
<feature type="helix" evidence="2">
    <location>
        <begin position="130"/>
        <end position="136"/>
    </location>
</feature>
<feature type="helix" evidence="2">
    <location>
        <begin position="139"/>
        <end position="151"/>
    </location>
</feature>
<feature type="strand" evidence="2">
    <location>
        <begin position="155"/>
        <end position="158"/>
    </location>
</feature>
<feature type="helix" evidence="2">
    <location>
        <begin position="171"/>
        <end position="181"/>
    </location>
</feature>
<feature type="strand" evidence="2">
    <location>
        <begin position="184"/>
        <end position="192"/>
    </location>
</feature>
<feature type="helix" evidence="2">
    <location>
        <begin position="196"/>
        <end position="204"/>
    </location>
</feature>
<feature type="strand" evidence="2">
    <location>
        <begin position="208"/>
        <end position="214"/>
    </location>
</feature>
<feature type="helix" evidence="2">
    <location>
        <begin position="215"/>
        <end position="220"/>
    </location>
</feature>
<sequence>MTPTRAQLAAFVDHTLLKPEATAADVAALVTEAAELGVYAVCVSPPMVPAAVQAGAGVRVASVAGFPSGKHVSAVKAHEAALAVASGAAEIDMVIDVGAALAGDLDGVRADIAAVRGAVGGAVLKVIVESSALLALADEHTLVRVCRAAEDAGADFVKTSTGFHPSGGASVRAVALMAEAVGGRLGVKASGGIRTAADALAMLDAGATRLGLSGTRAVLDGLG</sequence>
<reference key="1">
    <citation type="submission" date="2006-10" db="EMBL/GenBank/DDBJ databases">
        <authorList>
            <person name="Fleischmann R.D."/>
            <person name="Dodson R.J."/>
            <person name="Haft D.H."/>
            <person name="Merkel J.S."/>
            <person name="Nelson W.C."/>
            <person name="Fraser C.M."/>
        </authorList>
    </citation>
    <scope>NUCLEOTIDE SEQUENCE [LARGE SCALE GENOMIC DNA]</scope>
    <source>
        <strain>104</strain>
    </source>
</reference>